<organism>
    <name type="scientific">Streptomyces hygroscopicus subsp. limoneus</name>
    <dbReference type="NCBI Taxonomy" id="264445"/>
    <lineage>
        <taxon>Bacteria</taxon>
        <taxon>Bacillati</taxon>
        <taxon>Actinomycetota</taxon>
        <taxon>Actinomycetes</taxon>
        <taxon>Kitasatosporales</taxon>
        <taxon>Streptomycetaceae</taxon>
        <taxon>Streptomyces</taxon>
        <taxon>Streptomyces violaceusniger group</taxon>
    </lineage>
</organism>
<keyword id="KW-0045">Antibiotic biosynthesis</keyword>
<keyword id="KW-0342">GTP-binding</keyword>
<keyword id="KW-0460">Magnesium</keyword>
<keyword id="KW-0479">Metal-binding</keyword>
<keyword id="KW-0547">Nucleotide-binding</keyword>
<keyword id="KW-0548">Nucleotidyltransferase</keyword>
<keyword id="KW-0808">Transferase</keyword>
<sequence>MDGVRAVLLAGGEGRRMGPLGRGRLKPLVPFGGTSRLIDFSIANVHRSGLRDVLLLSQYEERRLMDDLHLVWNGRHRGFRIDFGPYDAVYRRSPGKLPEQLPERIWPLERGTADALLTKAEYVFRQGDAEASEILVLHADHVYRFDYGDMIREHRASKAALTVSYQRIERRYVHLFGMVEFDGDGLLTAFEEKPDDPTSDLVFAAFCLFDAATLRRYLEQLRGTDWQHDISRDVIPAMLAGGELIRGYEVKSYWEDIGTVDRYHRAHRGLLRADPTLALSDMPLTVAPEVPRHLVPGGPGRRASVVAADVANEGEIVSSVVYPGARIGVDAHVVDCVVLPGARVPDGTHLASAIVLEDGSVQQCEAEREEVAL</sequence>
<proteinExistence type="evidence at protein level"/>
<reference key="1">
    <citation type="journal article" date="2006" name="Gene">
        <title>Genetic localization and heterologous expression of validamycin biosynthetic gene cluster isolated from Streptomyces hygroscopicus var. limoneus KCCM 11405 (IFO 12704).</title>
        <authorList>
            <person name="Singh D."/>
            <person name="Seo M.J."/>
            <person name="Kwon H.J."/>
            <person name="Rajkarnikar A."/>
            <person name="Kim K.R."/>
            <person name="Kim S.O."/>
            <person name="Suh J.W."/>
        </authorList>
    </citation>
    <scope>NUCLEOTIDE SEQUENCE [GENOMIC DNA]</scope>
    <scope>FUNCTION</scope>
    <source>
        <strain evidence="9">ATCC 21432 / NBRC 12704 / KCTC 1717 / KCCM 11405</strain>
    </source>
</reference>
<reference key="2">
    <citation type="submission" date="2015-11" db="EMBL/GenBank/DDBJ databases">
        <authorList>
            <person name="Kim K.M."/>
        </authorList>
    </citation>
    <scope>NUCLEOTIDE SEQUENCE [LARGE SCALE GENOMIC DNA]</scope>
    <source>
        <strain>ATCC 21432 / NBRC 12704 / KCTC 1717 / KCCM 11405</strain>
    </source>
</reference>
<reference key="3">
    <citation type="journal article" date="2006" name="J. Microbiol. Biotechnol.">
        <title>Characterization of D-glucose alpha-1-phosphate uridylyltransferase (VldB) and glucokinase (VldC) involved in validamycin biosynthesis of Streptomyces hygroscopicus var. limoneus KCCM 11405.</title>
        <authorList>
            <person name="Seo M.J."/>
            <person name="Im E.M."/>
            <person name="Singh D."/>
            <person name="Rajkarnikar A."/>
            <person name="Kwon H.J."/>
            <person name="Hyun C.G."/>
            <person name="Suh J.W."/>
            <person name="Pyun Y.R."/>
            <person name="Kim S.O."/>
        </authorList>
    </citation>
    <scope>PRELIMINARY FUNCTION</scope>
    <source>
        <strain>ATCC 21432 / NBRC 12704 / KCTC 1717 / KCCM 11405</strain>
    </source>
</reference>
<reference key="4">
    <citation type="journal article" date="2011" name="J. Am. Chem. Soc.">
        <title>Pseudoglycosyltransferase catalyzes nonglycosidic C-N coupling in validamycin a biosynthesis.</title>
        <authorList>
            <person name="Asamizu S."/>
            <person name="Yang J."/>
            <person name="Almabruk K.H."/>
            <person name="Mahmud T."/>
        </authorList>
    </citation>
    <scope>FUNCTION</scope>
    <scope>CATALYTIC ACTIVITY</scope>
    <scope>COFACTOR</scope>
    <scope>SUBSTRATE SPECIFICITY</scope>
    <source>
        <strain>ATCC 21432 / NBRC 12704 / KCTC 1717 / KCCM 11405</strain>
    </source>
</reference>
<evidence type="ECO:0000250" key="1">
    <source>
        <dbReference type="UniProtKB" id="P0A6V1"/>
    </source>
</evidence>
<evidence type="ECO:0000269" key="2">
    <source>
    </source>
</evidence>
<evidence type="ECO:0000269" key="3">
    <source>
    </source>
</evidence>
<evidence type="ECO:0000303" key="4">
    <source>
    </source>
</evidence>
<evidence type="ECO:0000303" key="5">
    <source>
    </source>
</evidence>
<evidence type="ECO:0000305" key="6"/>
<evidence type="ECO:0000305" key="7">
    <source>
    </source>
</evidence>
<evidence type="ECO:0000305" key="8">
    <source ref="3"/>
</evidence>
<evidence type="ECO:0000312" key="9">
    <source>
        <dbReference type="EMBL" id="ABC67266.1"/>
    </source>
</evidence>
<evidence type="ECO:0000312" key="10">
    <source>
        <dbReference type="EMBL" id="ALO98986.1"/>
    </source>
</evidence>
<name>VLDB_STRHL</name>
<accession>Q15JG4</accession>
<feature type="chain" id="PRO_0000442844" description="Valienol-1-phosphate guanylyltransferase">
    <location>
        <begin position="1"/>
        <end position="373"/>
    </location>
</feature>
<feature type="binding site" evidence="1">
    <location>
        <position position="177"/>
    </location>
    <ligand>
        <name>substrate</name>
    </ligand>
</feature>
<feature type="binding site" evidence="1">
    <location>
        <begin position="192"/>
        <end position="193"/>
    </location>
    <ligand>
        <name>substrate</name>
    </ligand>
</feature>
<protein>
    <recommendedName>
        <fullName evidence="5">Valienol-1-phosphate guanylyltransferase</fullName>
        <ecNumber evidence="3">2.7.7.91</ecNumber>
    </recommendedName>
    <alternativeName>
        <fullName evidence="5">Cyclitol nucleotidyltransferase</fullName>
    </alternativeName>
</protein>
<dbReference type="EC" id="2.7.7.91" evidence="3"/>
<dbReference type="EMBL" id="DQ223652">
    <property type="protein sequence ID" value="ABC67266.1"/>
    <property type="molecule type" value="Genomic_DNA"/>
</dbReference>
<dbReference type="EMBL" id="CP013220">
    <property type="protein sequence ID" value="ALO98986.1"/>
    <property type="molecule type" value="Genomic_DNA"/>
</dbReference>
<dbReference type="SMR" id="Q15JG4"/>
<dbReference type="PATRIC" id="fig|264445.3.peg.8522"/>
<dbReference type="BioCyc" id="MetaCyc:MONOMER-19688"/>
<dbReference type="GO" id="GO:0008878">
    <property type="term" value="F:glucose-1-phosphate adenylyltransferase activity"/>
    <property type="evidence" value="ECO:0007669"/>
    <property type="project" value="InterPro"/>
</dbReference>
<dbReference type="GO" id="GO:0005525">
    <property type="term" value="F:GTP binding"/>
    <property type="evidence" value="ECO:0007669"/>
    <property type="project" value="UniProtKB-KW"/>
</dbReference>
<dbReference type="GO" id="GO:0046872">
    <property type="term" value="F:metal ion binding"/>
    <property type="evidence" value="ECO:0007669"/>
    <property type="project" value="UniProtKB-KW"/>
</dbReference>
<dbReference type="GO" id="GO:0017000">
    <property type="term" value="P:antibiotic biosynthetic process"/>
    <property type="evidence" value="ECO:0007669"/>
    <property type="project" value="UniProtKB-KW"/>
</dbReference>
<dbReference type="GO" id="GO:0005978">
    <property type="term" value="P:glycogen biosynthetic process"/>
    <property type="evidence" value="ECO:0007669"/>
    <property type="project" value="InterPro"/>
</dbReference>
<dbReference type="Gene3D" id="2.160.10.10">
    <property type="entry name" value="Hexapeptide repeat proteins"/>
    <property type="match status" value="1"/>
</dbReference>
<dbReference type="Gene3D" id="3.90.550.10">
    <property type="entry name" value="Spore Coat Polysaccharide Biosynthesis Protein SpsA, Chain A"/>
    <property type="match status" value="1"/>
</dbReference>
<dbReference type="InterPro" id="IPR011831">
    <property type="entry name" value="ADP-Glc_PPase"/>
</dbReference>
<dbReference type="InterPro" id="IPR005835">
    <property type="entry name" value="NTP_transferase_dom"/>
</dbReference>
<dbReference type="InterPro" id="IPR029044">
    <property type="entry name" value="Nucleotide-diphossugar_trans"/>
</dbReference>
<dbReference type="PANTHER" id="PTHR43523:SF12">
    <property type="entry name" value="GLUCOSE-1-PHOSPHATE ADENYLYLTRANSFERASE LARGE SUBUNIT 1, CHLOROPLASTIC-RELATED"/>
    <property type="match status" value="1"/>
</dbReference>
<dbReference type="PANTHER" id="PTHR43523">
    <property type="entry name" value="GLUCOSE-1-PHOSPHATE ADENYLYLTRANSFERASE-RELATED"/>
    <property type="match status" value="1"/>
</dbReference>
<dbReference type="Pfam" id="PF00483">
    <property type="entry name" value="NTP_transferase"/>
    <property type="match status" value="1"/>
</dbReference>
<dbReference type="SUPFAM" id="SSF53448">
    <property type="entry name" value="Nucleotide-diphospho-sugar transferases"/>
    <property type="match status" value="1"/>
</dbReference>
<gene>
    <name evidence="4" type="primary">vldB</name>
    <name evidence="10" type="ORF">SHL15_8009</name>
</gene>
<comment type="function">
    <text evidence="2 3">Involved in the biosynthesis of the antifungal agent validamycin A (PubMed:16725283). Catalyzes the conversion of valienol 1-phosphate to GDP-valienol and less effectively to ADP-valienol or other NDP derivatives (PubMed:21766819).</text>
</comment>
<comment type="catalytic activity">
    <reaction evidence="3">
        <text>valienol 1-phosphate + GTP + H(+) = GDP-valienol + diphosphate</text>
        <dbReference type="Rhea" id="RHEA:26055"/>
        <dbReference type="ChEBI" id="CHEBI:15378"/>
        <dbReference type="ChEBI" id="CHEBI:33019"/>
        <dbReference type="ChEBI" id="CHEBI:37565"/>
        <dbReference type="ChEBI" id="CHEBI:91252"/>
        <dbReference type="ChEBI" id="CHEBI:91253"/>
        <dbReference type="EC" id="2.7.7.91"/>
    </reaction>
</comment>
<comment type="cofactor">
    <cofactor evidence="7">
        <name>Mg(2+)</name>
        <dbReference type="ChEBI" id="CHEBI:18420"/>
    </cofactor>
</comment>
<comment type="similarity">
    <text evidence="6">Belongs to the bacterial/plant glucose-1-phosphate adenylyltransferase family.</text>
</comment>
<comment type="caution">
    <text evidence="8">Was originally thought to be a glucose 1-phosphate uridylyltransferase.</text>
</comment>